<organism>
    <name type="scientific">Streptomyces sp</name>
    <dbReference type="NCBI Taxonomy" id="1931"/>
    <lineage>
        <taxon>Bacteria</taxon>
        <taxon>Bacillati</taxon>
        <taxon>Actinomycetota</taxon>
        <taxon>Actinomycetes</taxon>
        <taxon>Kitasatosporales</taxon>
        <taxon>Streptomycetaceae</taxon>
        <taxon>Streptomyces</taxon>
    </lineage>
</organism>
<evidence type="ECO:0000269" key="1">
    <source>
    </source>
</evidence>
<evidence type="ECO:0000303" key="2">
    <source>
    </source>
</evidence>
<evidence type="ECO:0000305" key="3"/>
<dbReference type="EC" id="1.14.13.209" evidence="1"/>
<dbReference type="EMBL" id="AB112586">
    <property type="protein sequence ID" value="BAC78378.1"/>
    <property type="molecule type" value="Genomic_DNA"/>
</dbReference>
<dbReference type="SMR" id="Q7X281"/>
<dbReference type="KEGG" id="ag:BAC78378"/>
<dbReference type="BioCyc" id="MetaCyc:MONOMER-15920"/>
<dbReference type="BRENDA" id="1.14.13.209">
    <property type="organism ID" value="1284"/>
</dbReference>
<dbReference type="GO" id="GO:0071949">
    <property type="term" value="F:FAD binding"/>
    <property type="evidence" value="ECO:0007669"/>
    <property type="project" value="InterPro"/>
</dbReference>
<dbReference type="GO" id="GO:0016709">
    <property type="term" value="F:oxidoreductase activity, acting on paired donors, with incorporation or reduction of molecular oxygen, NAD(P)H as one donor, and incorporation of one atom of oxygen"/>
    <property type="evidence" value="ECO:0000315"/>
    <property type="project" value="UniProtKB"/>
</dbReference>
<dbReference type="GO" id="GO:0009056">
    <property type="term" value="P:catabolic process"/>
    <property type="evidence" value="ECO:0007669"/>
    <property type="project" value="UniProtKB-KW"/>
</dbReference>
<dbReference type="Gene3D" id="3.30.9.20">
    <property type="match status" value="1"/>
</dbReference>
<dbReference type="Gene3D" id="3.50.50.60">
    <property type="entry name" value="FAD/NAD(P)-binding domain"/>
    <property type="match status" value="1"/>
</dbReference>
<dbReference type="InterPro" id="IPR002938">
    <property type="entry name" value="FAD-bd"/>
</dbReference>
<dbReference type="InterPro" id="IPR036188">
    <property type="entry name" value="FAD/NAD-bd_sf"/>
</dbReference>
<dbReference type="InterPro" id="IPR050631">
    <property type="entry name" value="PheA/TfdB_FAD_monoxygenase"/>
</dbReference>
<dbReference type="PANTHER" id="PTHR43476">
    <property type="entry name" value="3-(3-HYDROXY-PHENYL)PROPIONATE/3-HYDROXYCINNAMIC ACID HYDROXYLASE"/>
    <property type="match status" value="1"/>
</dbReference>
<dbReference type="PANTHER" id="PTHR43476:SF4">
    <property type="entry name" value="BLR0106 PROTEIN"/>
    <property type="match status" value="1"/>
</dbReference>
<dbReference type="Pfam" id="PF01494">
    <property type="entry name" value="FAD_binding_3"/>
    <property type="match status" value="1"/>
</dbReference>
<dbReference type="PRINTS" id="PR00420">
    <property type="entry name" value="RNGMNOXGNASE"/>
</dbReference>
<dbReference type="SUPFAM" id="SSF51905">
    <property type="entry name" value="FAD/NAD(P)-binding domain"/>
    <property type="match status" value="1"/>
</dbReference>
<gene>
    <name evidence="2" type="primary">sdgC</name>
</gene>
<reference key="1">
    <citation type="journal article" date="2004" name="Appl. Environ. Microbiol.">
        <title>Novel pathway of salicylate degradation by Streptomyces sp. strain WA46.</title>
        <authorList>
            <person name="Ishiyama D."/>
            <person name="Vujaklija D."/>
            <person name="Davies J."/>
        </authorList>
    </citation>
    <scope>NUCLEOTIDE SEQUENCE [GENOMIC DNA]</scope>
    <scope>FUNCTION</scope>
    <scope>CATALYTIC ACTIVITY</scope>
    <scope>DISRUPTION PHENOTYPE</scope>
    <scope>INDUCTION</scope>
    <source>
        <strain>WA46</strain>
    </source>
</reference>
<accession>Q7X281</accession>
<proteinExistence type="evidence at protein level"/>
<sequence length="517" mass="56572">MKVACIGAGPGGLFFATLLKRSRPDAEVVVFERNRPDDTFGFGVVFSDATLDAIDAADPVLSEALEKHGRHWDDIEVRVHGERERVGGMGMAAVVRKTLLSLLQERARAEGVQMRFQDEVRDPAELDDFDLVVVCDGANSRFRTLFADDFGPTAEVASAKFIWFGTTYMFDGLTFVHQDGPHGVFAAHAYPISDSLSTFIVETDADSWARAGLDAFDPATPLGMSDEKTKSYLEDLFRAQIDGHPLVGNNSRWANFATRRARSWRSGKWVLLGDAAHTAHFSVGSGTKMAMEDAVALAETLGEASRSVPEALDLYEERRRPKVERIQNSARPSLSWWEHFGRYVRSFDAPTQFAFHFLTRSIPRGKLAVRDAAYVDRVDGWWLRHHEAGPLKTPFRVGPYRLPTRRVTVGDDLLTGTDGTGIPMVPFSGQPFGAGVWIDAPDTEEGLPLALDQVRETAEAGVLLVGVRGGTALTRVLVAEEARLAHSLPAAIVGAYDDDTATTLVLSGRADLVGGTK</sequence>
<feature type="chain" id="PRO_0000435737" description="Salicyloyl-CoA 5-hydroxylase">
    <location>
        <begin position="1"/>
        <end position="517"/>
    </location>
</feature>
<keyword id="KW-0058">Aromatic hydrocarbons catabolism</keyword>
<keyword id="KW-0520">NAD</keyword>
<keyword id="KW-0560">Oxidoreductase</keyword>
<comment type="function">
    <text evidence="1">Involved in the degradation of salicylate via a pathway involving coenzyme A derivative. Catalyzes the aromatic hydroxylation of salicylyl-CoA to yield gentisyl-CoA.</text>
</comment>
<comment type="catalytic activity">
    <reaction evidence="1">
        <text>2-hydroxybenzoyl-CoA + NADH + O2 + H(+) = 2,5-dihydroxybenzoyl-CoA + NAD(+) + H2O</text>
        <dbReference type="Rhea" id="RHEA:48008"/>
        <dbReference type="ChEBI" id="CHEBI:15377"/>
        <dbReference type="ChEBI" id="CHEBI:15378"/>
        <dbReference type="ChEBI" id="CHEBI:15379"/>
        <dbReference type="ChEBI" id="CHEBI:57540"/>
        <dbReference type="ChEBI" id="CHEBI:57945"/>
        <dbReference type="ChEBI" id="CHEBI:67148"/>
        <dbReference type="ChEBI" id="CHEBI:88147"/>
        <dbReference type="EC" id="1.14.13.209"/>
    </reaction>
</comment>
<comment type="induction">
    <text evidence="1">By salicylate.</text>
</comment>
<comment type="disruption phenotype">
    <text evidence="1">Cells lacking this gene are unable to degrade salicylate.</text>
</comment>
<comment type="similarity">
    <text evidence="3">Belongs to the aromatic-ring hydroxylase family. KMO subfamily.</text>
</comment>
<protein>
    <recommendedName>
        <fullName evidence="2">Salicyloyl-CoA 5-hydroxylase</fullName>
        <ecNumber evidence="1">1.14.13.209</ecNumber>
    </recommendedName>
</protein>
<name>SDGC_STRSQ</name>